<name>RASF1_HUMAN</name>
<gene>
    <name evidence="28" type="primary">RASSF1</name>
    <name evidence="25" type="synonym">RDA32</name>
</gene>
<keyword id="KW-0002">3D-structure</keyword>
<keyword id="KW-0007">Acetylation</keyword>
<keyword id="KW-0877">Alternative promoter usage</keyword>
<keyword id="KW-0025">Alternative splicing</keyword>
<keyword id="KW-0131">Cell cycle</keyword>
<keyword id="KW-0963">Cytoplasm</keyword>
<keyword id="KW-0206">Cytoskeleton</keyword>
<keyword id="KW-0479">Metal-binding</keyword>
<keyword id="KW-0488">Methylation</keyword>
<keyword id="KW-0493">Microtubule</keyword>
<keyword id="KW-0539">Nucleus</keyword>
<keyword id="KW-0597">Phosphoprotein</keyword>
<keyword id="KW-1267">Proteomics identification</keyword>
<keyword id="KW-1185">Reference proteome</keyword>
<keyword id="KW-0043">Tumor suppressor</keyword>
<keyword id="KW-0862">Zinc</keyword>
<keyword id="KW-0863">Zinc-finger</keyword>
<evidence type="ECO:0000250" key="1">
    <source>
        <dbReference type="UniProtKB" id="Q99MK9"/>
    </source>
</evidence>
<evidence type="ECO:0000255" key="2">
    <source>
        <dbReference type="PROSITE-ProRule" id="PRU00166"/>
    </source>
</evidence>
<evidence type="ECO:0000255" key="3">
    <source>
        <dbReference type="PROSITE-ProRule" id="PRU00226"/>
    </source>
</evidence>
<evidence type="ECO:0000255" key="4">
    <source>
        <dbReference type="PROSITE-ProRule" id="PRU00310"/>
    </source>
</evidence>
<evidence type="ECO:0000256" key="5">
    <source>
        <dbReference type="SAM" id="MobiDB-lite"/>
    </source>
</evidence>
<evidence type="ECO:0000269" key="6">
    <source>
    </source>
</evidence>
<evidence type="ECO:0000269" key="7">
    <source>
    </source>
</evidence>
<evidence type="ECO:0000269" key="8">
    <source>
    </source>
</evidence>
<evidence type="ECO:0000269" key="9">
    <source>
    </source>
</evidence>
<evidence type="ECO:0000269" key="10">
    <source>
    </source>
</evidence>
<evidence type="ECO:0000269" key="11">
    <source>
    </source>
</evidence>
<evidence type="ECO:0000269" key="12">
    <source>
    </source>
</evidence>
<evidence type="ECO:0000269" key="13">
    <source>
    </source>
</evidence>
<evidence type="ECO:0000269" key="14">
    <source>
    </source>
</evidence>
<evidence type="ECO:0000269" key="15">
    <source>
    </source>
</evidence>
<evidence type="ECO:0000269" key="16">
    <source>
    </source>
</evidence>
<evidence type="ECO:0000269" key="17">
    <source>
    </source>
</evidence>
<evidence type="ECO:0000269" key="18">
    <source>
    </source>
</evidence>
<evidence type="ECO:0000303" key="19">
    <source>
    </source>
</evidence>
<evidence type="ECO:0000303" key="20">
    <source>
    </source>
</evidence>
<evidence type="ECO:0000303" key="21">
    <source>
    </source>
</evidence>
<evidence type="ECO:0000303" key="22">
    <source ref="3"/>
</evidence>
<evidence type="ECO:0000305" key="23"/>
<evidence type="ECO:0000312" key="24">
    <source>
        <dbReference type="EMBL" id="AAB67312.1"/>
    </source>
</evidence>
<evidence type="ECO:0000312" key="25">
    <source>
        <dbReference type="EMBL" id="AAC16001.1"/>
    </source>
</evidence>
<evidence type="ECO:0000312" key="26">
    <source>
        <dbReference type="EMBL" id="AAD44174.1"/>
    </source>
</evidence>
<evidence type="ECO:0000312" key="27">
    <source>
        <dbReference type="EMBL" id="AAF35127.2"/>
    </source>
</evidence>
<evidence type="ECO:0000312" key="28">
    <source>
        <dbReference type="EMBL" id="AAF35128.2"/>
    </source>
</evidence>
<evidence type="ECO:0000312" key="29">
    <source>
        <dbReference type="EMBL" id="AAF35129.2"/>
    </source>
</evidence>
<evidence type="ECO:0007744" key="30">
    <source>
    </source>
</evidence>
<evidence type="ECO:0007744" key="31">
    <source>
    </source>
</evidence>
<evidence type="ECO:0007829" key="32">
    <source>
        <dbReference type="PDB" id="2KZU"/>
    </source>
</evidence>
<comment type="function">
    <text evidence="6 7 9 11 12 15 16 17 18">Potential tumor suppressor. Required for death receptor-dependent apoptosis. Mediates activation of STK3/MST2 and STK4/MST1 during Fas-induced apoptosis by preventing their dephosphorylation. When associated with MOAP1, promotes BAX conformational change and translocation to mitochondrial membranes in response to TNF and TNFSF10 stimulation. Isoform A interacts with CDC20, an activator of the anaphase-promoting complex, APC, resulting in the inhibition of APC activity and mitotic progression. Inhibits proliferation by negatively regulating cell cycle progression at the level of G1/S-phase transition by regulating accumulation of cyclin D1 protein. Isoform C has been shown not to perform these roles, no function has been identified for this isoform. Isoform A disrupts interactions among MDM2, DAXX and USP7, thus contributing to the efficient activation of TP53 by promoting MDM2 self-ubiquitination in cell-cycle checkpoint control in response to DNA damage.</text>
</comment>
<comment type="subunit">
    <text evidence="1 6 8 10 11 12 13 14 15 16 17 18">Interacts with MAP1S (PubMed:15205320, PubMed:15753381). Interacts with XPA (PubMed:10888881). Binds to the N-terminal of CDC20 during prometaphase (PubMed:14743218). Binds to STK3/MST2 and STK4/MST1 (PubMed:15109305, PubMed:16510573, PubMed:21199877). Recruited to the TNFRSF1A and TNFRSF10A complexes in response to their respective cognate ligand, after internalization (PubMed:15949439). Can self-associate (PubMed:11857081). Part of a complex with MDM2, DAXX, RASSF1 and USP7 (PubMed:18566590). Interacts with ECM2 (By similarity).</text>
</comment>
<comment type="subunit">
    <molecule>Isoform A</molecule>
    <text evidence="1 8 10 15 17">Interacts with MOAP1 (PubMed:15949439). Interacts with E4F1 (PubMed:14729613). Interacts with RSSF5 and probably associates with HRAS via a RSSF1 isoform A-RSSF5 heterodimer (PubMed:11857081). Interacts (via C-terminus) with DAXX (via N-terminus); the interaction is independent of MDM2 and TP53 (PubMed:18566590). Interacts (via N-terminus) with MDM2 (via C-terminus); the interaction is independent of TP53 (PubMed:18566590). Interacts with RAB39A (By similarity). Interacts with RAB39B; the interaction is weak (By similarity).</text>
</comment>
<comment type="subunit">
    <molecule>Isoform C</molecule>
    <text evidence="1 17">Interacts (via N-terminus) with DAXX (PubMed:18566590). Interacts with RAB39B; the interaction is strong (By similarity). Does not interact with RAB39A (By similarity).</text>
</comment>
<comment type="subunit">
    <molecule>Isoform H</molecule>
    <text evidence="17">Interacts (via N-terminus) with DAXX.</text>
</comment>
<comment type="interaction">
    <interactant intactId="EBI-367363">
        <id>Q9NS23</id>
    </interactant>
    <interactant intactId="EBI-77321">
        <id>Q9UER7</id>
        <label>DAXX</label>
    </interactant>
    <organismsDiffer>false</organismsDiffer>
    <experiments>6</experiments>
</comment>
<comment type="interaction">
    <interactant intactId="EBI-367363">
        <id>Q9NS23</id>
    </interactant>
    <interactant intactId="EBI-712001">
        <id>O95166</id>
        <label>GABARAP</label>
    </interactant>
    <organismsDiffer>false</organismsDiffer>
    <experiments>2</experiments>
</comment>
<comment type="interaction">
    <interactant intactId="EBI-367363">
        <id>Q9NS23</id>
    </interactant>
    <interactant intactId="EBI-720116">
        <id>P60520</id>
        <label>GABARAPL2</label>
    </interactant>
    <organismsDiffer>false</organismsDiffer>
    <experiments>2</experiments>
</comment>
<comment type="interaction">
    <interactant intactId="EBI-367363">
        <id>Q9NS23</id>
    </interactant>
    <interactant intactId="EBI-710124">
        <id>O60341</id>
        <label>KDM1A</label>
    </interactant>
    <organismsDiffer>false</organismsDiffer>
    <experiments>2</experiments>
</comment>
<comment type="interaction">
    <interactant intactId="EBI-367363">
        <id>Q9NS23</id>
    </interactant>
    <interactant intactId="EBI-373144">
        <id>Q9GZQ8</id>
        <label>MAP1LC3B</label>
    </interactant>
    <organismsDiffer>false</organismsDiffer>
    <experiments>2</experiments>
</comment>
<comment type="interaction">
    <interactant intactId="EBI-367363">
        <id>Q9NS23</id>
    </interactant>
    <interactant intactId="EBI-2603996">
        <id>Q9BXW4</id>
        <label>MAP1LC3C</label>
    </interactant>
    <organismsDiffer>false</organismsDiffer>
    <experiments>2</experiments>
</comment>
<comment type="interaction">
    <interactant intactId="EBI-367363">
        <id>Q9NS23</id>
    </interactant>
    <interactant intactId="EBI-389668">
        <id>Q00987</id>
        <label>MDM2</label>
    </interactant>
    <organismsDiffer>false</organismsDiffer>
    <experiments>5</experiments>
</comment>
<comment type="interaction">
    <interactant intactId="EBI-367363">
        <id>Q9NS23</id>
    </interactant>
    <interactant intactId="EBI-349968">
        <id>O43463</id>
        <label>SUV39H1</label>
    </interactant>
    <organismsDiffer>false</organismsDiffer>
    <experiments>2</experiments>
</comment>
<comment type="interaction">
    <interactant intactId="EBI-438698">
        <id>Q9NS23-2</id>
    </interactant>
    <interactant intactId="EBI-367462">
        <id>Q12834</id>
        <label>CDC20</label>
    </interactant>
    <organismsDiffer>false</organismsDiffer>
    <experiments>2</experiments>
</comment>
<comment type="interaction">
    <interactant intactId="EBI-438698">
        <id>Q9NS23-2</id>
    </interactant>
    <interactant intactId="EBI-1227043">
        <id>Q66K89</id>
        <label>E4F1</label>
    </interactant>
    <organismsDiffer>false</organismsDiffer>
    <experiments>7</experiments>
</comment>
<comment type="interaction">
    <interactant intactId="EBI-438698">
        <id>Q9NS23-2</id>
    </interactant>
    <interactant intactId="EBI-739737">
        <id>Q01844</id>
        <label>EWSR1</label>
    </interactant>
    <organismsDiffer>false</organismsDiffer>
    <experiments>3</experiments>
</comment>
<comment type="interaction">
    <interactant intactId="EBI-438698">
        <id>Q9NS23-2</id>
    </interactant>
    <interactant intactId="EBI-350145">
        <id>P01112</id>
        <label>HRAS</label>
    </interactant>
    <organismsDiffer>false</organismsDiffer>
    <experiments>2</experiments>
</comment>
<comment type="interaction">
    <interactant intactId="EBI-438698">
        <id>Q9NS23-2</id>
    </interactant>
    <interactant intactId="EBI-438698">
        <id>Q9NS23-2</id>
        <label>RASSF1</label>
    </interactant>
    <organismsDiffer>false</organismsDiffer>
    <experiments>2</experiments>
</comment>
<comment type="interaction">
    <interactant intactId="EBI-438698">
        <id>Q9NS23-2</id>
    </interactant>
    <interactant intactId="EBI-992580">
        <id>Q13188</id>
        <label>STK3</label>
    </interactant>
    <organismsDiffer>false</organismsDiffer>
    <experiments>7</experiments>
</comment>
<comment type="interaction">
    <interactant intactId="EBI-438698">
        <id>Q9NS23-2</id>
    </interactant>
    <interactant intactId="EBI-367376">
        <id>Q13043</id>
        <label>STK4</label>
    </interactant>
    <organismsDiffer>false</organismsDiffer>
    <experiments>4</experiments>
</comment>
<comment type="interaction">
    <interactant intactId="EBI-438710">
        <id>Q9NS23-4</id>
    </interactant>
    <interactant intactId="EBI-1222467">
        <id>P02649</id>
        <label>APOE</label>
    </interactant>
    <organismsDiffer>false</organismsDiffer>
    <experiments>3</experiments>
</comment>
<comment type="interaction">
    <interactant intactId="EBI-438710">
        <id>Q9NS23-4</id>
    </interactant>
    <interactant intactId="EBI-946046">
        <id>P54252</id>
        <label>ATXN3</label>
    </interactant>
    <organismsDiffer>false</organismsDiffer>
    <experiments>3</experiments>
</comment>
<comment type="interaction">
    <interactant intactId="EBI-438710">
        <id>Q9NS23-4</id>
    </interactant>
    <interactant intactId="EBI-77321">
        <id>Q9UER7</id>
        <label>DAXX</label>
    </interactant>
    <organismsDiffer>false</organismsDiffer>
    <experiments>5</experiments>
</comment>
<comment type="interaction">
    <interactant intactId="EBI-438710">
        <id>Q9NS23-4</id>
    </interactant>
    <interactant intactId="EBI-10976677">
        <id>G5E9A7</id>
        <label>DMWD</label>
    </interactant>
    <organismsDiffer>false</organismsDiffer>
    <experiments>3</experiments>
</comment>
<comment type="interaction">
    <interactant intactId="EBI-438710">
        <id>Q9NS23-4</id>
    </interactant>
    <interactant intactId="EBI-10968534">
        <id>P50570-2</id>
        <label>DNM2</label>
    </interactant>
    <organismsDiffer>false</organismsDiffer>
    <experiments>3</experiments>
</comment>
<comment type="interaction">
    <interactant intactId="EBI-438710">
        <id>Q9NS23-4</id>
    </interactant>
    <interactant intactId="EBI-1054228">
        <id>P41091</id>
        <label>EIF2S3</label>
    </interactant>
    <organismsDiffer>false</organismsDiffer>
    <experiments>3</experiments>
</comment>
<comment type="interaction">
    <interactant intactId="EBI-438710">
        <id>Q9NS23-4</id>
    </interactant>
    <interactant intactId="EBI-348399">
        <id>P22607</id>
        <label>FGFR3</label>
    </interactant>
    <organismsDiffer>false</organismsDiffer>
    <experiments>3</experiments>
</comment>
<comment type="interaction">
    <interactant intactId="EBI-438710">
        <id>Q9NS23-4</id>
    </interactant>
    <interactant intactId="EBI-949340">
        <id>Q16595</id>
        <label>FXN</label>
    </interactant>
    <organismsDiffer>false</organismsDiffer>
    <experiments>3</experiments>
</comment>
<comment type="interaction">
    <interactant intactId="EBI-438710">
        <id>Q9NS23-4</id>
    </interactant>
    <interactant intactId="EBI-744302">
        <id>P14136</id>
        <label>GFAP</label>
    </interactant>
    <organismsDiffer>false</organismsDiffer>
    <experiments>3</experiments>
</comment>
<comment type="interaction">
    <interactant intactId="EBI-438710">
        <id>Q9NS23-4</id>
    </interactant>
    <interactant intactId="EBI-1955541">
        <id>Q53GS7</id>
        <label>GLE1</label>
    </interactant>
    <organismsDiffer>false</organismsDiffer>
    <experiments>3</experiments>
</comment>
<comment type="interaction">
    <interactant intactId="EBI-438710">
        <id>Q9NS23-4</id>
    </interactant>
    <interactant intactId="EBI-12690664">
        <id>P28358</id>
        <label>HOXD10</label>
    </interactant>
    <organismsDiffer>false</organismsDiffer>
    <experiments>3</experiments>
</comment>
<comment type="interaction">
    <interactant intactId="EBI-438710">
        <id>Q9NS23-4</id>
    </interactant>
    <interactant intactId="EBI-350145">
        <id>P01112</id>
        <label>HRAS</label>
    </interactant>
    <organismsDiffer>false</organismsDiffer>
    <experiments>4</experiments>
</comment>
<comment type="interaction">
    <interactant intactId="EBI-438710">
        <id>Q9NS23-4</id>
    </interactant>
    <interactant intactId="EBI-466029">
        <id>P42858</id>
        <label>HTT</label>
    </interactant>
    <organismsDiffer>false</organismsDiffer>
    <experiments>3</experiments>
</comment>
<comment type="interaction">
    <interactant intactId="EBI-438710">
        <id>Q9NS23-4</id>
    </interactant>
    <interactant intactId="EBI-1055254">
        <id>Q8WXH2</id>
        <label>JPH3</label>
    </interactant>
    <organismsDiffer>false</organismsDiffer>
    <experiments>6</experiments>
</comment>
<comment type="interaction">
    <interactant intactId="EBI-438710">
        <id>Q9NS23-4</id>
    </interactant>
    <interactant intactId="EBI-725647">
        <id>Q99732</id>
        <label>LITAF</label>
    </interactant>
    <organismsDiffer>false</organismsDiffer>
    <experiments>3</experiments>
</comment>
<comment type="interaction">
    <interactant intactId="EBI-438710">
        <id>Q9NS23-4</id>
    </interactant>
    <interactant intactId="EBI-1189067">
        <id>P51608</id>
        <label>MECP2</label>
    </interactant>
    <organismsDiffer>false</organismsDiffer>
    <experiments>3</experiments>
</comment>
<comment type="interaction">
    <interactant intactId="EBI-438710">
        <id>Q9NS23-4</id>
    </interactant>
    <interactant intactId="EBI-713665">
        <id>P19404</id>
        <label>NDUFV2</label>
    </interactant>
    <organismsDiffer>false</organismsDiffer>
    <experiments>6</experiments>
</comment>
<comment type="interaction">
    <interactant intactId="EBI-438710">
        <id>Q9NS23-4</id>
    </interactant>
    <interactant intactId="EBI-1053431">
        <id>P49591</id>
        <label>SARS1</label>
    </interactant>
    <organismsDiffer>false</organismsDiffer>
    <experiments>3</experiments>
</comment>
<comment type="interaction">
    <interactant intactId="EBI-438710">
        <id>Q9NS23-4</id>
    </interactant>
    <interactant intactId="EBI-5235340">
        <id>Q7Z699</id>
        <label>SPRED1</label>
    </interactant>
    <organismsDiffer>false</organismsDiffer>
    <experiments>3</experiments>
</comment>
<comment type="interaction">
    <interactant intactId="EBI-438710">
        <id>Q9NS23-4</id>
    </interactant>
    <interactant intactId="EBI-2902553">
        <id>Q9NUW8</id>
        <label>TDP1</label>
    </interactant>
    <organismsDiffer>false</organismsDiffer>
    <experiments>3</experiments>
</comment>
<comment type="interaction">
    <interactant intactId="EBI-438710">
        <id>Q9NS23-4</id>
    </interactant>
    <interactant intactId="EBI-25900580">
        <id>Q9Y649</id>
    </interactant>
    <organismsDiffer>false</organismsDiffer>
    <experiments>3</experiments>
</comment>
<comment type="subcellular location">
    <molecule>Isoform A</molecule>
    <subcellularLocation>
        <location>Cytoplasm</location>
        <location>Cytoskeleton</location>
    </subcellularLocation>
    <subcellularLocation>
        <location>Cytoplasm</location>
        <location>Cytoskeleton</location>
        <location>Microtubule organizing center</location>
        <location>Centrosome</location>
    </subcellularLocation>
    <subcellularLocation>
        <location>Cytoplasm</location>
        <location>Cytoskeleton</location>
        <location>Spindle</location>
    </subcellularLocation>
    <subcellularLocation>
        <location>Cytoplasm</location>
        <location>Cytoskeleton</location>
        <location>Spindle pole</location>
    </subcellularLocation>
    <subcellularLocation>
        <location>Nucleus</location>
    </subcellularLocation>
    <text>Localizes to cytoplasmic microtubules during interphase, to bipolar centrosomes associated with microtubules during prophase, to spindle fibers and spindle poles at metaphase and anaphase, to the midzone during early telophase, and to the midbody in late telophase in cells. Colocalizes with MDM2 in the nucleus.</text>
</comment>
<comment type="subcellular location">
    <molecule>Isoform C</molecule>
    <subcellularLocation>
        <location>Nucleus</location>
    </subcellularLocation>
    <text>Predominantly nuclear.</text>
</comment>
<comment type="alternative products">
    <event type="alternative promoter"/>
    <event type="alternative splicing"/>
    <isoform>
        <id>Q9NS23-1</id>
        <name evidence="7">D</name>
        <name>RASSF1D</name>
        <name evidence="7">Cardiac-specific</name>
        <sequence type="displayed"/>
    </isoform>
    <isoform>
        <id>Q9NS23-2</id>
        <name evidence="6 7">A</name>
        <name>RASSF1A</name>
        <sequence type="described" ref="VSP_050771"/>
    </isoform>
    <isoform>
        <id>Q9NS23-3</id>
        <name evidence="6">B</name>
        <name>RASSF1B</name>
        <sequence type="described" ref="VSP_050770"/>
    </isoform>
    <isoform>
        <id>Q9NS23-4</id>
        <name evidence="6 7">C</name>
        <name>RASSF1C</name>
        <sequence type="described" ref="VSP_050773 VSP_050774"/>
    </isoform>
    <isoform>
        <id>Q9NS23-5</id>
        <name evidence="7">E</name>
        <name>RASSF1E</name>
        <name evidence="7">Pancreas-specific</name>
        <sequence type="described" ref="VSP_050771 VSP_050772"/>
    </isoform>
    <isoform>
        <id>Q9NS23-6</id>
        <name evidence="7">F</name>
        <name>RASSF1F</name>
        <sequence type="described" ref="VSP_050776 VSP_050777"/>
    </isoform>
    <isoform>
        <id>Q9NS23-7</id>
        <name evidence="7">G</name>
        <name>RASSF1G</name>
        <sequence type="described" ref="VSP_050775 VSP_050778"/>
    </isoform>
    <isoform>
        <id>Q9NS23-9</id>
        <name>H</name>
        <sequence type="described" ref="VSP_050773 VSP_050774 VSP_050778"/>
    </isoform>
</comment>
<comment type="tissue specificity">
    <text evidence="6 7">Isoform A and isoform C are ubiquitously expressed in all tissues tested, however isoform A is absent in many corresponding cancer cell lines. Isoform B is mainly expressed in hematopoietic cells.</text>
</comment>
<comment type="miscellaneous">
    <molecule>Isoform D</molecule>
    <text>Produced by alternative promoter usage.</text>
</comment>
<comment type="miscellaneous">
    <molecule>Isoform A</molecule>
    <text evidence="23">Produced by alternative splicing of isoform D.</text>
</comment>
<comment type="miscellaneous">
    <molecule>Isoform B</molecule>
    <text evidence="23">Produced by alternative splicing of isoform D.</text>
</comment>
<comment type="miscellaneous">
    <molecule>Isoform C</molecule>
    <text evidence="23">Produced by alternative promoter usage.</text>
</comment>
<comment type="miscellaneous">
    <molecule>Isoform E</molecule>
    <text evidence="23">Produced by alternative splicing of isoform D.</text>
</comment>
<comment type="miscellaneous">
    <molecule>Isoform F</molecule>
    <text evidence="23">Produced by alternative splicing of isoform D.</text>
</comment>
<comment type="miscellaneous">
    <molecule>Isoform G</molecule>
    <text evidence="23">Produced by alternative splicing of isoform D.</text>
</comment>
<comment type="miscellaneous">
    <molecule>Isoform H</molecule>
    <text evidence="23">Produced by alternative splicing of isoform C.</text>
</comment>
<comment type="sequence caution" evidence="23">
    <conflict type="erroneous gene model prediction">
        <sequence resource="EMBL-CDS" id="AAB67312"/>
    </conflict>
</comment>
<comment type="online information" name="Atlas of Genetics and Cytogenetics in Oncology and Haematology">
    <link uri="https://atlasgeneticsoncology.org/gene/377/RASSF1"/>
</comment>
<protein>
    <recommendedName>
        <fullName>Ras association domain-containing protein 1</fullName>
    </recommendedName>
</protein>
<proteinExistence type="evidence at protein level"/>
<organism>
    <name type="scientific">Homo sapiens</name>
    <name type="common">Human</name>
    <dbReference type="NCBI Taxonomy" id="9606"/>
    <lineage>
        <taxon>Eukaryota</taxon>
        <taxon>Metazoa</taxon>
        <taxon>Chordata</taxon>
        <taxon>Craniata</taxon>
        <taxon>Vertebrata</taxon>
        <taxon>Euteleostomi</taxon>
        <taxon>Mammalia</taxon>
        <taxon>Eutheria</taxon>
        <taxon>Euarchontoglires</taxon>
        <taxon>Primates</taxon>
        <taxon>Haplorrhini</taxon>
        <taxon>Catarrhini</taxon>
        <taxon>Hominidae</taxon>
        <taxon>Homo</taxon>
    </lineage>
</organism>
<reference evidence="23 26" key="1">
    <citation type="journal article" date="2000" name="Nat. Genet.">
        <title>Epigenetic inactivation of a RAS association domain family protein from the lung tumour suppressor locus 3p21.3.</title>
        <authorList>
            <person name="Dammann R."/>
            <person name="Li C."/>
            <person name="Yoon J.-H."/>
            <person name="Chin P.L."/>
            <person name="Bates S."/>
            <person name="Pfeifer G.P."/>
        </authorList>
    </citation>
    <scope>NUCLEOTIDE SEQUENCE [MRNA] (ISOFORMS A; B AND C)</scope>
    <scope>FUNCTION</scope>
    <scope>TISSUE SPECIFICITY</scope>
    <scope>VARIANT GLN-21</scope>
    <scope>INTERACTION WITH XPA</scope>
</reference>
<reference evidence="23 28" key="2">
    <citation type="journal article" date="2001" name="J. Natl. Cancer Inst.">
        <title>Epigenetic inactivation of RASSF1A in lung and breast cancers and malignant phenotype suppression.</title>
        <authorList>
            <person name="Burbee D.G."/>
            <person name="Forgacs E."/>
            <person name="Zochbauer-Muller S."/>
            <person name="Shivakumar L."/>
            <person name="Fong K."/>
            <person name="Gao B."/>
            <person name="Randle D."/>
            <person name="Kondo M."/>
            <person name="Virmani A."/>
            <person name="Bader S."/>
            <person name="Sekido Y."/>
            <person name="Latif F."/>
            <person name="Milchgrub S."/>
            <person name="Toyooka S."/>
            <person name="Gazdar A.F."/>
            <person name="Lerman M.I."/>
            <person name="Zabarovsky E."/>
            <person name="White M."/>
            <person name="Minna J.D."/>
        </authorList>
    </citation>
    <scope>NUCLEOTIDE SEQUENCE [MRNA] (ISOFORMS A; C; D; E; F AND G)</scope>
    <scope>FUNCTION</scope>
    <scope>TISSUE SPECIFICITY</scope>
    <scope>VARIANTS GLN-21; CYS-53; GLU-133; SER-137 AND CYS-329</scope>
    <source>
        <tissue evidence="28">Heart</tissue>
        <tissue evidence="27">Lung</tissue>
        <tissue evidence="29">Pancreas</tissue>
    </source>
</reference>
<reference evidence="23 24" key="3">
    <citation type="submission" date="2004-10" db="EMBL/GenBank/DDBJ databases">
        <title>Cloning of human full-length CDSs in BD Creator(TM) system donor vector.</title>
        <authorList>
            <person name="Kalnine N."/>
            <person name="Chen X."/>
            <person name="Rolfs A."/>
            <person name="Halleck A."/>
            <person name="Hines L."/>
            <person name="Eisenstein S."/>
            <person name="Koundinya M."/>
            <person name="Raphael J."/>
            <person name="Moreira D."/>
            <person name="Kelley T."/>
            <person name="LaBaer J."/>
            <person name="Lin Y."/>
            <person name="Phelan M."/>
            <person name="Farmer A."/>
        </authorList>
    </citation>
    <scope>NUCLEOTIDE SEQUENCE [LARGE SCALE MRNA] (ISOFORM C)</scope>
</reference>
<reference key="4">
    <citation type="journal article" date="2006" name="Nature">
        <title>The DNA sequence, annotation and analysis of human chromosome 3.</title>
        <authorList>
            <person name="Muzny D.M."/>
            <person name="Scherer S.E."/>
            <person name="Kaul R."/>
            <person name="Wang J."/>
            <person name="Yu J."/>
            <person name="Sudbrak R."/>
            <person name="Buhay C.J."/>
            <person name="Chen R."/>
            <person name="Cree A."/>
            <person name="Ding Y."/>
            <person name="Dugan-Rocha S."/>
            <person name="Gill R."/>
            <person name="Gunaratne P."/>
            <person name="Harris R.A."/>
            <person name="Hawes A.C."/>
            <person name="Hernandez J."/>
            <person name="Hodgson A.V."/>
            <person name="Hume J."/>
            <person name="Jackson A."/>
            <person name="Khan Z.M."/>
            <person name="Kovar-Smith C."/>
            <person name="Lewis L.R."/>
            <person name="Lozado R.J."/>
            <person name="Metzker M.L."/>
            <person name="Milosavljevic A."/>
            <person name="Miner G.R."/>
            <person name="Morgan M.B."/>
            <person name="Nazareth L.V."/>
            <person name="Scott G."/>
            <person name="Sodergren E."/>
            <person name="Song X.-Z."/>
            <person name="Steffen D."/>
            <person name="Wei S."/>
            <person name="Wheeler D.A."/>
            <person name="Wright M.W."/>
            <person name="Worley K.C."/>
            <person name="Yuan Y."/>
            <person name="Zhang Z."/>
            <person name="Adams C.Q."/>
            <person name="Ansari-Lari M.A."/>
            <person name="Ayele M."/>
            <person name="Brown M.J."/>
            <person name="Chen G."/>
            <person name="Chen Z."/>
            <person name="Clendenning J."/>
            <person name="Clerc-Blankenburg K.P."/>
            <person name="Chen R."/>
            <person name="Chen Z."/>
            <person name="Davis C."/>
            <person name="Delgado O."/>
            <person name="Dinh H.H."/>
            <person name="Dong W."/>
            <person name="Draper H."/>
            <person name="Ernst S."/>
            <person name="Fu G."/>
            <person name="Gonzalez-Garay M.L."/>
            <person name="Garcia D.K."/>
            <person name="Gillett W."/>
            <person name="Gu J."/>
            <person name="Hao B."/>
            <person name="Haugen E."/>
            <person name="Havlak P."/>
            <person name="He X."/>
            <person name="Hennig S."/>
            <person name="Hu S."/>
            <person name="Huang W."/>
            <person name="Jackson L.R."/>
            <person name="Jacob L.S."/>
            <person name="Kelly S.H."/>
            <person name="Kube M."/>
            <person name="Levy R."/>
            <person name="Li Z."/>
            <person name="Liu B."/>
            <person name="Liu J."/>
            <person name="Liu W."/>
            <person name="Lu J."/>
            <person name="Maheshwari M."/>
            <person name="Nguyen B.-V."/>
            <person name="Okwuonu G.O."/>
            <person name="Palmeiri A."/>
            <person name="Pasternak S."/>
            <person name="Perez L.M."/>
            <person name="Phelps K.A."/>
            <person name="Plopper F.J."/>
            <person name="Qiang B."/>
            <person name="Raymond C."/>
            <person name="Rodriguez R."/>
            <person name="Saenphimmachak C."/>
            <person name="Santibanez J."/>
            <person name="Shen H."/>
            <person name="Shen Y."/>
            <person name="Subramanian S."/>
            <person name="Tabor P.E."/>
            <person name="Verduzco D."/>
            <person name="Waldron L."/>
            <person name="Wang J."/>
            <person name="Wang J."/>
            <person name="Wang Q."/>
            <person name="Williams G.A."/>
            <person name="Wong G.K.-S."/>
            <person name="Yao Z."/>
            <person name="Zhang J."/>
            <person name="Zhang X."/>
            <person name="Zhao G."/>
            <person name="Zhou J."/>
            <person name="Zhou Y."/>
            <person name="Nelson D."/>
            <person name="Lehrach H."/>
            <person name="Reinhardt R."/>
            <person name="Naylor S.L."/>
            <person name="Yang H."/>
            <person name="Olson M."/>
            <person name="Weinstock G."/>
            <person name="Gibbs R.A."/>
        </authorList>
    </citation>
    <scope>NUCLEOTIDE SEQUENCE [LARGE SCALE GENOMIC DNA]</scope>
</reference>
<reference evidence="23 24" key="5">
    <citation type="submission" date="2005-07" db="EMBL/GenBank/DDBJ databases">
        <authorList>
            <person name="Mural R.J."/>
            <person name="Istrail S."/>
            <person name="Sutton G.G."/>
            <person name="Florea L."/>
            <person name="Halpern A.L."/>
            <person name="Mobarry C.M."/>
            <person name="Lippert R."/>
            <person name="Walenz B."/>
            <person name="Shatkay H."/>
            <person name="Dew I."/>
            <person name="Miller J.R."/>
            <person name="Flanigan M.J."/>
            <person name="Edwards N.J."/>
            <person name="Bolanos R."/>
            <person name="Fasulo D."/>
            <person name="Halldorsson B.V."/>
            <person name="Hannenhalli S."/>
            <person name="Turner R."/>
            <person name="Yooseph S."/>
            <person name="Lu F."/>
            <person name="Nusskern D.R."/>
            <person name="Shue B.C."/>
            <person name="Zheng X.H."/>
            <person name="Zhong F."/>
            <person name="Delcher A.L."/>
            <person name="Huson D.H."/>
            <person name="Kravitz S.A."/>
            <person name="Mouchard L."/>
            <person name="Reinert K."/>
            <person name="Remington K.A."/>
            <person name="Clark A.G."/>
            <person name="Waterman M.S."/>
            <person name="Eichler E.E."/>
            <person name="Adams M.D."/>
            <person name="Hunkapiller M.W."/>
            <person name="Myers E.W."/>
            <person name="Venter J.C."/>
        </authorList>
    </citation>
    <scope>NUCLEOTIDE SEQUENCE [LARGE SCALE GENOMIC DNA]</scope>
</reference>
<reference key="6">
    <citation type="journal article" date="2004" name="Genome Res.">
        <title>The status, quality, and expansion of the NIH full-length cDNA project: the Mammalian Gene Collection (MGC).</title>
        <authorList>
            <consortium name="The MGC Project Team"/>
        </authorList>
    </citation>
    <scope>NUCLEOTIDE SEQUENCE [LARGE SCALE MRNA] (ISOFORMS A AND B)</scope>
    <source>
        <tissue>Blood</tissue>
        <tissue>Brain</tissue>
    </source>
</reference>
<reference evidence="23" key="7">
    <citation type="journal article" date="2002" name="Mol. Cell. Biol.">
        <title>The RASSF1A tumor suppressor blocks cell cycle progression and inhibits cyclin D1 accumulation.</title>
        <authorList>
            <person name="Shivakumar L."/>
            <person name="Minna J."/>
            <person name="Sakamaki T."/>
            <person name="Pestell R."/>
            <person name="White M.A."/>
        </authorList>
    </citation>
    <scope>FUNCTION</scope>
    <scope>VARIANT PHE-135</scope>
    <scope>CHARACTERIZATION OF VARIANTS PHE-135 AND SER-137</scope>
</reference>
<reference key="8">
    <citation type="journal article" date="2002" name="Oncogene">
        <title>The putative tumor suppressor RASSF1A homodimerizes and heterodimerizes with the Ras-GTP binding protein Nore1.</title>
        <authorList>
            <person name="Ortiz-Vega S."/>
            <person name="Khokhlatchev A."/>
            <person name="Nedwidek M."/>
            <person name="Zhang X.F."/>
            <person name="Dammann R."/>
            <person name="Pfeifer G.P."/>
            <person name="Avruch J."/>
        </authorList>
    </citation>
    <scope>SELF-ASSOCIATION</scope>
    <scope>INTERACTION WITH RSSF5 AND HRAS</scope>
</reference>
<reference key="9">
    <citation type="journal article" date="2002" name="Oncogene">
        <authorList>
            <person name="Ortiz-Vega S."/>
            <person name="Khokhlatchev A."/>
            <person name="Nedwidek M."/>
            <person name="Zhang X.F."/>
            <person name="Dammann R."/>
            <person name="Pfeifer G.P."/>
            <person name="Avruch J."/>
        </authorList>
    </citation>
    <scope>ERRATUM OF PUBMED:11857081</scope>
</reference>
<reference key="10">
    <citation type="journal article" date="2004" name="Cancer Res.">
        <title>Identification of the E1A-regulated transcription factor p120 E4F as an interacting partner of the RASSF1A candidate tumor suppressor gene.</title>
        <authorList>
            <person name="Fenton S.L."/>
            <person name="Dallol A."/>
            <person name="Agathanggelou A."/>
            <person name="Hesson L."/>
            <person name="Ahmed-Choudhury J."/>
            <person name="Baksh S."/>
            <person name="Sardet C."/>
            <person name="Dammann R."/>
            <person name="Minna J.D."/>
            <person name="Downward J."/>
            <person name="Maher E.R."/>
            <person name="Latif F."/>
        </authorList>
    </citation>
    <scope>INTERACTION WITH E4F1</scope>
</reference>
<reference key="11">
    <citation type="journal article" date="2004" name="Cancer Res.">
        <title>RASSF1A interacts with microtubule-associated proteins and modulates microtubule dynamics.</title>
        <authorList>
            <person name="Dallol A."/>
            <person name="Agathanggelou A."/>
            <person name="Fenton S.L."/>
            <person name="Ahmed-Choudhury J."/>
            <person name="Hesson L."/>
            <person name="Vos M.D."/>
            <person name="Clark G.J."/>
            <person name="Downward J."/>
            <person name="Maher E.R."/>
            <person name="Latif F."/>
        </authorList>
    </citation>
    <scope>INTERACTION WITH MAP1S</scope>
</reference>
<reference evidence="23" key="12">
    <citation type="journal article" date="2004" name="Nat. Cell Biol.">
        <title>The tumour suppressor RASSF1A regulates mitosis by inhibiting the APC-Cdc20 complex.</title>
        <authorList>
            <person name="Song M.S."/>
            <person name="Song S.J."/>
            <person name="Ayad N.G."/>
            <person name="Chang J.S."/>
            <person name="Lee J.H."/>
            <person name="Hong H.K."/>
            <person name="Lee H."/>
            <person name="Choi N."/>
            <person name="Kim J."/>
            <person name="Kim H."/>
            <person name="Kim J.W."/>
            <person name="Choi E.-J."/>
            <person name="Kirschner M.W."/>
            <person name="Lim D.-S."/>
        </authorList>
    </citation>
    <scope>FUNCTION</scope>
    <scope>SUBCELLULAR LOCATION</scope>
    <scope>INTERACTION WITH CDC20</scope>
</reference>
<reference evidence="23" key="13">
    <citation type="journal article" date="2004" name="Biochem. J.">
        <title>Regulation of the MST1 kinase by autophosphorylation, by the growth inhibitory proteins, RASSF1 and NORE1, and by Ras.</title>
        <authorList>
            <person name="Praskova M."/>
            <person name="Khoklatchev A."/>
            <person name="Ortiz-Vega S."/>
            <person name="Avruch J."/>
        </authorList>
    </citation>
    <scope>FUNCTION</scope>
    <scope>INTERACTION WITH STK3/MST2 AND STK4/MST1</scope>
</reference>
<reference key="14">
    <citation type="journal article" date="2005" name="Cancer Res.">
        <title>Specificity of the methylation-suppressed A isoform of candidate tumor suppressor RASSF1 for microtubule hyperstabilization is determined by cell death inducer C19ORF5.</title>
        <authorList>
            <person name="Liu L."/>
            <person name="Vo A."/>
            <person name="McKeehan W.L."/>
        </authorList>
    </citation>
    <scope>INTERACTION WITH MAP1S</scope>
</reference>
<reference key="15">
    <citation type="journal article" date="2005" name="Mol. Cell">
        <title>The tumor suppressor RASSF1A and MAP-1 link death receptor signaling to Bax conformational change and cell death.</title>
        <authorList>
            <person name="Baksh S."/>
            <person name="Tommasi S."/>
            <person name="Fenton S."/>
            <person name="Yu V.C."/>
            <person name="Martins L.M."/>
            <person name="Pfeifer G.P."/>
            <person name="Latif F."/>
            <person name="Downward J."/>
            <person name="Neel B.G."/>
        </authorList>
    </citation>
    <scope>INTERACTION WITH MOAP1</scope>
    <scope>FUNCTION</scope>
</reference>
<reference key="16">
    <citation type="journal article" date="2006" name="Cancer Res.">
        <title>Role of the tumor suppressor RASSF1A in Mst1-mediated apoptosis.</title>
        <authorList>
            <person name="Oh H.J."/>
            <person name="Lee K.-K."/>
            <person name="Song S.J."/>
            <person name="Jin M.S."/>
            <person name="Song M.S."/>
            <person name="Lee J.H."/>
            <person name="Im C.R."/>
            <person name="Lee J.-O."/>
            <person name="Yonehara S."/>
            <person name="Lim D.-S."/>
        </authorList>
    </citation>
    <scope>FUNCTION</scope>
    <scope>INTERACTION WITH STK3/MST2 AND STK4/MST1</scope>
</reference>
<reference key="17">
    <citation type="journal article" date="2008" name="EMBO J.">
        <title>The tumour suppressor RASSF1A promotes MDM2 self-ubiquitination by disrupting the MDM2-DAXX-HAUSP complex.</title>
        <authorList>
            <person name="Song M.S."/>
            <person name="Song S.J."/>
            <person name="Kim S.Y."/>
            <person name="Oh H.J."/>
            <person name="Lim D.S."/>
        </authorList>
    </citation>
    <scope>FUNCTION</scope>
    <scope>IDENTIFICATION IN A COMPLEX WITH MDM2; DAXX AND USP7</scope>
    <scope>INTERACTION WITH DAXX AND MDM2</scope>
    <scope>SUBCELLULAR LOCATION</scope>
</reference>
<reference key="18">
    <citation type="journal article" date="2009" name="Mol. Cell. Proteomics">
        <title>Large-scale proteomics analysis of the human kinome.</title>
        <authorList>
            <person name="Oppermann F.S."/>
            <person name="Gnad F."/>
            <person name="Olsen J.V."/>
            <person name="Hornberger R."/>
            <person name="Greff Z."/>
            <person name="Keri G."/>
            <person name="Mann M."/>
            <person name="Daub H."/>
        </authorList>
    </citation>
    <scope>ACETYLATION [LARGE SCALE ANALYSIS] AT SER-2</scope>
    <scope>PHOSPHORYLATION [LARGE SCALE ANALYSIS] AT SER-2</scope>
    <scope>CLEAVAGE OF INITIATOR METHIONINE [LARGE SCALE ANALYSIS]</scope>
    <scope>IDENTIFICATION BY MASS SPECTROMETRY [LARGE SCALE ANALYSIS]</scope>
</reference>
<reference key="19">
    <citation type="journal article" date="2011" name="J. Biol. Chem.">
        <title>The tumor suppressor RASSF1A prevents dephosphorylation of the mammalian STE20-like kinases MST1 and MST2.</title>
        <authorList>
            <person name="Guo C."/>
            <person name="Zhang X."/>
            <person name="Pfeifer G.P."/>
        </authorList>
    </citation>
    <scope>FUNCTION</scope>
    <scope>INTERACTION WITH STK3/MST2 AND STK4/MST1</scope>
</reference>
<reference key="20">
    <citation type="journal article" date="2014" name="Mol. Cell. Proteomics">
        <title>Immunoaffinity enrichment and mass spectrometry analysis of protein methylation.</title>
        <authorList>
            <person name="Guo A."/>
            <person name="Gu H."/>
            <person name="Zhou J."/>
            <person name="Mulhern D."/>
            <person name="Wang Y."/>
            <person name="Lee K.A."/>
            <person name="Yang V."/>
            <person name="Aguiar M."/>
            <person name="Kornhauser J."/>
            <person name="Jia X."/>
            <person name="Ren J."/>
            <person name="Beausoleil S.A."/>
            <person name="Silva J.C."/>
            <person name="Vemulapalli V."/>
            <person name="Bedford M.T."/>
            <person name="Comb M.J."/>
        </authorList>
    </citation>
    <scope>METHYLATION [LARGE SCALE ANALYSIS] AT ARG-36</scope>
    <scope>IDENTIFICATION BY MASS SPECTROMETRY [LARGE SCALE ANALYSIS]</scope>
    <source>
        <tissue>Colon carcinoma</tissue>
    </source>
</reference>
<reference key="21">
    <citation type="journal article" date="2010" name="Structure">
        <title>Structural characterization of the DAXX N-terminal helical bundle domain and its complex with Rassf1C.</title>
        <authorList>
            <person name="Escobar-Cabrera E."/>
            <person name="Lau D.K."/>
            <person name="Giovinazzi S."/>
            <person name="Ishov A.M."/>
            <person name="McIntosh L.P."/>
        </authorList>
    </citation>
    <scope>STRUCTURE BY NMR (ISOFORM C/H) IN COMPLEX WITH DAXX</scope>
</reference>
<dbReference type="EMBL" id="AF061836">
    <property type="protein sequence ID" value="AAC16001.1"/>
    <property type="molecule type" value="mRNA"/>
</dbReference>
<dbReference type="EMBL" id="AF132675">
    <property type="protein sequence ID" value="AAD44174.1"/>
    <property type="molecule type" value="mRNA"/>
</dbReference>
<dbReference type="EMBL" id="AF132676">
    <property type="protein sequence ID" value="AAD44175.1"/>
    <property type="molecule type" value="mRNA"/>
</dbReference>
<dbReference type="EMBL" id="AF132677">
    <property type="protein sequence ID" value="AAD44176.1"/>
    <property type="molecule type" value="mRNA"/>
</dbReference>
<dbReference type="EMBL" id="AF040703">
    <property type="protein sequence ID" value="AAC70910.2"/>
    <property type="molecule type" value="mRNA"/>
</dbReference>
<dbReference type="EMBL" id="AF102770">
    <property type="protein sequence ID" value="AAF35127.2"/>
    <property type="molecule type" value="mRNA"/>
</dbReference>
<dbReference type="EMBL" id="AF102771">
    <property type="protein sequence ID" value="AAF35128.2"/>
    <property type="molecule type" value="mRNA"/>
</dbReference>
<dbReference type="EMBL" id="AF102772">
    <property type="protein sequence ID" value="AAF35129.2"/>
    <property type="molecule type" value="mRNA"/>
</dbReference>
<dbReference type="EMBL" id="BT020047">
    <property type="protein sequence ID" value="AAV38850.1"/>
    <property type="molecule type" value="mRNA"/>
</dbReference>
<dbReference type="EMBL" id="BT020048">
    <property type="protein sequence ID" value="AAV38851.1"/>
    <property type="molecule type" value="mRNA"/>
</dbReference>
<dbReference type="EMBL" id="AF286217">
    <property type="protein sequence ID" value="AAG10038.1"/>
    <property type="molecule type" value="mRNA"/>
</dbReference>
<dbReference type="EMBL" id="AF291719">
    <property type="protein sequence ID" value="AAG10064.1"/>
    <property type="molecule type" value="mRNA"/>
</dbReference>
<dbReference type="EMBL" id="AC002455">
    <property type="status" value="NOT_ANNOTATED_CDS"/>
    <property type="molecule type" value="Genomic_DNA"/>
</dbReference>
<dbReference type="EMBL" id="AC002481">
    <property type="protein sequence ID" value="AAB67312.1"/>
    <property type="status" value="ALT_SEQ"/>
    <property type="molecule type" value="Genomic_DNA"/>
</dbReference>
<dbReference type="EMBL" id="CH471055">
    <property type="protein sequence ID" value="EAW65098.1"/>
    <property type="molecule type" value="Genomic_DNA"/>
</dbReference>
<dbReference type="EMBL" id="CH471055">
    <property type="protein sequence ID" value="EAW65101.1"/>
    <property type="molecule type" value="Genomic_DNA"/>
</dbReference>
<dbReference type="EMBL" id="CH471055">
    <property type="protein sequence ID" value="EAW65102.1"/>
    <property type="molecule type" value="Genomic_DNA"/>
</dbReference>
<dbReference type="EMBL" id="BC110412">
    <property type="protein sequence ID" value="AAI10413.1"/>
    <property type="molecule type" value="mRNA"/>
</dbReference>
<dbReference type="EMBL" id="BC143879">
    <property type="protein sequence ID" value="AAI43880.1"/>
    <property type="molecule type" value="mRNA"/>
</dbReference>
<dbReference type="CCDS" id="CCDS2820.1">
    <molecule id="Q9NS23-1"/>
</dbReference>
<dbReference type="CCDS" id="CCDS2821.1">
    <molecule id="Q9NS23-4"/>
</dbReference>
<dbReference type="CCDS" id="CCDS2822.1">
    <molecule id="Q9NS23-3"/>
</dbReference>
<dbReference type="CCDS" id="CCDS43096.1">
    <molecule id="Q9NS23-2"/>
</dbReference>
<dbReference type="RefSeq" id="NP_001193886.1">
    <molecule id="Q9NS23-3"/>
    <property type="nucleotide sequence ID" value="NM_001206957.2"/>
</dbReference>
<dbReference type="RefSeq" id="NP_009113.3">
    <molecule id="Q9NS23-2"/>
    <property type="nucleotide sequence ID" value="NM_007182.4"/>
</dbReference>
<dbReference type="RefSeq" id="NP_733830.1">
    <molecule id="Q9NS23-3"/>
    <property type="nucleotide sequence ID" value="NM_170712.3"/>
</dbReference>
<dbReference type="RefSeq" id="NP_733831.1">
    <molecule id="Q9NS23-4"/>
    <property type="nucleotide sequence ID" value="NM_170713.3"/>
</dbReference>
<dbReference type="RefSeq" id="NP_733832.1">
    <molecule id="Q9NS23-1"/>
    <property type="nucleotide sequence ID" value="NM_170714.2"/>
</dbReference>
<dbReference type="RefSeq" id="XP_011531617.1">
    <property type="nucleotide sequence ID" value="XM_011533315.1"/>
</dbReference>
<dbReference type="RefSeq" id="XP_011531618.1">
    <molecule id="Q9NS23-3"/>
    <property type="nucleotide sequence ID" value="XM_011533316.3"/>
</dbReference>
<dbReference type="RefSeq" id="XP_047303328.1">
    <molecule id="Q9NS23-3"/>
    <property type="nucleotide sequence ID" value="XM_047447372.1"/>
</dbReference>
<dbReference type="RefSeq" id="XP_054201065.1">
    <molecule id="Q9NS23-3"/>
    <property type="nucleotide sequence ID" value="XM_054345090.1"/>
</dbReference>
<dbReference type="PDB" id="2KZU">
    <property type="method" value="NMR"/>
    <property type="chains" value="B=-"/>
</dbReference>
<dbReference type="PDBsum" id="2KZU"/>
<dbReference type="SMR" id="Q9NS23"/>
<dbReference type="BioGRID" id="116356">
    <property type="interactions" value="97"/>
</dbReference>
<dbReference type="DIP" id="DIP-31270N"/>
<dbReference type="FunCoup" id="Q9NS23">
    <property type="interactions" value="1671"/>
</dbReference>
<dbReference type="IntAct" id="Q9NS23">
    <property type="interactions" value="64"/>
</dbReference>
<dbReference type="MINT" id="Q9NS23"/>
<dbReference type="STRING" id="9606.ENSP00000349547"/>
<dbReference type="iPTMnet" id="Q9NS23"/>
<dbReference type="PhosphoSitePlus" id="Q9NS23"/>
<dbReference type="BioMuta" id="RASSF1"/>
<dbReference type="DMDM" id="50401686"/>
<dbReference type="jPOST" id="Q9NS23"/>
<dbReference type="MassIVE" id="Q9NS23"/>
<dbReference type="PaxDb" id="9606-ENSP00000349547"/>
<dbReference type="PeptideAtlas" id="Q9NS23"/>
<dbReference type="ProteomicsDB" id="82465">
    <molecule id="Q9NS23-1"/>
</dbReference>
<dbReference type="ProteomicsDB" id="82466">
    <molecule id="Q9NS23-2"/>
</dbReference>
<dbReference type="ProteomicsDB" id="82467">
    <molecule id="Q9NS23-3"/>
</dbReference>
<dbReference type="ProteomicsDB" id="82468">
    <molecule id="Q9NS23-4"/>
</dbReference>
<dbReference type="ProteomicsDB" id="82469">
    <molecule id="Q9NS23-5"/>
</dbReference>
<dbReference type="ProteomicsDB" id="82470">
    <molecule id="Q9NS23-6"/>
</dbReference>
<dbReference type="ProteomicsDB" id="82471">
    <molecule id="Q9NS23-7"/>
</dbReference>
<dbReference type="ProteomicsDB" id="82472">
    <molecule id="Q9NS23-9"/>
</dbReference>
<dbReference type="Pumba" id="Q9NS23"/>
<dbReference type="Antibodypedia" id="30900">
    <property type="antibodies" value="535 antibodies from 37 providers"/>
</dbReference>
<dbReference type="DNASU" id="11186"/>
<dbReference type="Ensembl" id="ENST00000327761.7">
    <molecule id="Q9NS23-4"/>
    <property type="protein sequence ID" value="ENSP00000333327.3"/>
    <property type="gene ID" value="ENSG00000068028.18"/>
</dbReference>
<dbReference type="Ensembl" id="ENST00000357043.6">
    <molecule id="Q9NS23-1"/>
    <property type="protein sequence ID" value="ENSP00000349547.2"/>
    <property type="gene ID" value="ENSG00000068028.18"/>
</dbReference>
<dbReference type="Ensembl" id="ENST00000359365.9">
    <molecule id="Q9NS23-2"/>
    <property type="protein sequence ID" value="ENSP00000352323.4"/>
    <property type="gene ID" value="ENSG00000068028.18"/>
</dbReference>
<dbReference type="Ensembl" id="ENST00000395117.6">
    <molecule id="Q9NS23-6"/>
    <property type="protein sequence ID" value="ENSP00000378549.2"/>
    <property type="gene ID" value="ENSG00000068028.18"/>
</dbReference>
<dbReference type="Ensembl" id="ENST00000395126.7">
    <molecule id="Q9NS23-3"/>
    <property type="protein sequence ID" value="ENSP00000378558.3"/>
    <property type="gene ID" value="ENSG00000068028.18"/>
</dbReference>
<dbReference type="Ensembl" id="ENST00000482447.1">
    <molecule id="Q9NS23-7"/>
    <property type="protein sequence ID" value="ENSP00000433000.1"/>
    <property type="gene ID" value="ENSG00000068028.18"/>
</dbReference>
<dbReference type="Ensembl" id="ENST00000616212.4">
    <molecule id="Q9NS23-3"/>
    <property type="protein sequence ID" value="ENSP00000482696.1"/>
    <property type="gene ID" value="ENSG00000068028.18"/>
</dbReference>
<dbReference type="GeneID" id="11186"/>
<dbReference type="KEGG" id="hsa:11186"/>
<dbReference type="MANE-Select" id="ENST00000359365.9">
    <molecule id="Q9NS23-2"/>
    <property type="protein sequence ID" value="ENSP00000352323.4"/>
    <property type="RefSeq nucleotide sequence ID" value="NM_007182.5"/>
    <property type="RefSeq protein sequence ID" value="NP_009113.3"/>
</dbReference>
<dbReference type="UCSC" id="uc003dab.2">
    <molecule id="Q9NS23-1"/>
    <property type="organism name" value="human"/>
</dbReference>
<dbReference type="AGR" id="HGNC:9882"/>
<dbReference type="CTD" id="11186"/>
<dbReference type="DisGeNET" id="11186"/>
<dbReference type="GeneCards" id="RASSF1"/>
<dbReference type="HGNC" id="HGNC:9882">
    <property type="gene designation" value="RASSF1"/>
</dbReference>
<dbReference type="HPA" id="ENSG00000068028">
    <property type="expression patterns" value="Low tissue specificity"/>
</dbReference>
<dbReference type="MalaCards" id="RASSF1"/>
<dbReference type="MIM" id="605082">
    <property type="type" value="gene"/>
</dbReference>
<dbReference type="neXtProt" id="NX_Q9NS23"/>
<dbReference type="OpenTargets" id="ENSG00000068028"/>
<dbReference type="PharmGKB" id="PA34245"/>
<dbReference type="VEuPathDB" id="HostDB:ENSG00000068028"/>
<dbReference type="eggNOG" id="KOG4239">
    <property type="taxonomic scope" value="Eukaryota"/>
</dbReference>
<dbReference type="GeneTree" id="ENSGT00940000155664"/>
<dbReference type="HOGENOM" id="CLU_045544_1_0_1"/>
<dbReference type="InParanoid" id="Q9NS23"/>
<dbReference type="OMA" id="PAFEMTW"/>
<dbReference type="OrthoDB" id="74314at2759"/>
<dbReference type="PAN-GO" id="Q9NS23">
    <property type="GO annotations" value="3 GO annotations based on evolutionary models"/>
</dbReference>
<dbReference type="PhylomeDB" id="Q9NS23"/>
<dbReference type="TreeFam" id="TF319243"/>
<dbReference type="PathwayCommons" id="Q9NS23"/>
<dbReference type="SignaLink" id="Q9NS23"/>
<dbReference type="SIGNOR" id="Q9NS23"/>
<dbReference type="BioGRID-ORCS" id="11186">
    <property type="hits" value="16 hits in 1163 CRISPR screens"/>
</dbReference>
<dbReference type="CD-CODE" id="8C2F96ED">
    <property type="entry name" value="Centrosome"/>
</dbReference>
<dbReference type="ChiTaRS" id="RASSF1">
    <property type="organism name" value="human"/>
</dbReference>
<dbReference type="GeneWiki" id="RASSF1"/>
<dbReference type="GenomeRNAi" id="11186"/>
<dbReference type="Pharos" id="Q9NS23">
    <property type="development level" value="Tbio"/>
</dbReference>
<dbReference type="PRO" id="PR:Q9NS23"/>
<dbReference type="Proteomes" id="UP000005640">
    <property type="component" value="Chromosome 3"/>
</dbReference>
<dbReference type="RNAct" id="Q9NS23">
    <property type="molecule type" value="protein"/>
</dbReference>
<dbReference type="Bgee" id="ENSG00000068028">
    <property type="expression patterns" value="Expressed in granulocyte and 130 other cell types or tissues"/>
</dbReference>
<dbReference type="GO" id="GO:0005813">
    <property type="term" value="C:centrosome"/>
    <property type="evidence" value="ECO:0007669"/>
    <property type="project" value="UniProtKB-SubCell"/>
</dbReference>
<dbReference type="GO" id="GO:0005737">
    <property type="term" value="C:cytoplasm"/>
    <property type="evidence" value="ECO:0007669"/>
    <property type="project" value="UniProtKB-KW"/>
</dbReference>
<dbReference type="GO" id="GO:0005874">
    <property type="term" value="C:microtubule"/>
    <property type="evidence" value="ECO:0007669"/>
    <property type="project" value="UniProtKB-KW"/>
</dbReference>
<dbReference type="GO" id="GO:0015630">
    <property type="term" value="C:microtubule cytoskeleton"/>
    <property type="evidence" value="ECO:0000314"/>
    <property type="project" value="UniProtKB"/>
</dbReference>
<dbReference type="GO" id="GO:0005634">
    <property type="term" value="C:nucleus"/>
    <property type="evidence" value="ECO:0000314"/>
    <property type="project" value="UniProtKB"/>
</dbReference>
<dbReference type="GO" id="GO:0000922">
    <property type="term" value="C:spindle pole"/>
    <property type="evidence" value="ECO:0007669"/>
    <property type="project" value="UniProtKB-SubCell"/>
</dbReference>
<dbReference type="GO" id="GO:0042802">
    <property type="term" value="F:identical protein binding"/>
    <property type="evidence" value="ECO:0000353"/>
    <property type="project" value="IntAct"/>
</dbReference>
<dbReference type="GO" id="GO:0031267">
    <property type="term" value="F:small GTPase binding"/>
    <property type="evidence" value="ECO:0007669"/>
    <property type="project" value="Ensembl"/>
</dbReference>
<dbReference type="GO" id="GO:0008270">
    <property type="term" value="F:zinc ion binding"/>
    <property type="evidence" value="ECO:0000304"/>
    <property type="project" value="UniProtKB"/>
</dbReference>
<dbReference type="GO" id="GO:0006974">
    <property type="term" value="P:DNA damage response"/>
    <property type="evidence" value="ECO:0000315"/>
    <property type="project" value="UniProtKB"/>
</dbReference>
<dbReference type="GO" id="GO:0031398">
    <property type="term" value="P:positive regulation of protein ubiquitination"/>
    <property type="evidence" value="ECO:0000314"/>
    <property type="project" value="UniProtKB"/>
</dbReference>
<dbReference type="GO" id="GO:0050821">
    <property type="term" value="P:protein stabilization"/>
    <property type="evidence" value="ECO:0000314"/>
    <property type="project" value="UniProtKB"/>
</dbReference>
<dbReference type="GO" id="GO:0007265">
    <property type="term" value="P:Ras protein signal transduction"/>
    <property type="evidence" value="ECO:0000314"/>
    <property type="project" value="UniProtKB"/>
</dbReference>
<dbReference type="GO" id="GO:0051726">
    <property type="term" value="P:regulation of cell cycle"/>
    <property type="evidence" value="ECO:0000314"/>
    <property type="project" value="UniProtKB"/>
</dbReference>
<dbReference type="GO" id="GO:1902806">
    <property type="term" value="P:regulation of cell cycle G1/S phase transition"/>
    <property type="evidence" value="ECO:0000315"/>
    <property type="project" value="UniProtKB"/>
</dbReference>
<dbReference type="CDD" id="cd20885">
    <property type="entry name" value="C1_RASSF1"/>
    <property type="match status" value="1"/>
</dbReference>
<dbReference type="CDD" id="cd17218">
    <property type="entry name" value="RA_RASSF1"/>
    <property type="match status" value="1"/>
</dbReference>
<dbReference type="CDD" id="cd21890">
    <property type="entry name" value="SARAH_RASSF1"/>
    <property type="match status" value="1"/>
</dbReference>
<dbReference type="DisProt" id="DP01533">
    <molecule id="Q9NS23-4"/>
</dbReference>
<dbReference type="FunFam" id="3.10.20.90:FF:000048">
    <property type="entry name" value="Ras association domain family member 1"/>
    <property type="match status" value="1"/>
</dbReference>
<dbReference type="FunFam" id="3.30.60.20:FF:000087">
    <property type="entry name" value="Ras association domain family member 1"/>
    <property type="match status" value="1"/>
</dbReference>
<dbReference type="FunFam" id="1.20.5.110:FF:000027">
    <property type="entry name" value="ras association domain-containing protein 1 isoform X1"/>
    <property type="match status" value="1"/>
</dbReference>
<dbReference type="Gene3D" id="1.20.5.110">
    <property type="match status" value="1"/>
</dbReference>
<dbReference type="Gene3D" id="3.30.60.20">
    <property type="match status" value="1"/>
</dbReference>
<dbReference type="Gene3D" id="3.10.20.90">
    <property type="entry name" value="Phosphatidylinositol 3-kinase Catalytic Subunit, Chain A, domain 1"/>
    <property type="match status" value="1"/>
</dbReference>
<dbReference type="InterPro" id="IPR046349">
    <property type="entry name" value="C1-like_sf"/>
</dbReference>
<dbReference type="InterPro" id="IPR002219">
    <property type="entry name" value="PE/DAG-bd"/>
</dbReference>
<dbReference type="InterPro" id="IPR000159">
    <property type="entry name" value="RA_dom"/>
</dbReference>
<dbReference type="InterPro" id="IPR033614">
    <property type="entry name" value="RASSF1-6"/>
</dbReference>
<dbReference type="InterPro" id="IPR033600">
    <property type="entry name" value="RASSF1_RA"/>
</dbReference>
<dbReference type="InterPro" id="IPR011524">
    <property type="entry name" value="SARAH_dom"/>
</dbReference>
<dbReference type="InterPro" id="IPR029071">
    <property type="entry name" value="Ubiquitin-like_domsf"/>
</dbReference>
<dbReference type="PANTHER" id="PTHR22738:SF12">
    <property type="entry name" value="RAS ASSOCIATION DOMAIN-CONTAINING PROTEIN 1"/>
    <property type="match status" value="1"/>
</dbReference>
<dbReference type="PANTHER" id="PTHR22738">
    <property type="entry name" value="RASSF"/>
    <property type="match status" value="1"/>
</dbReference>
<dbReference type="Pfam" id="PF00130">
    <property type="entry name" value="C1_1"/>
    <property type="match status" value="1"/>
</dbReference>
<dbReference type="Pfam" id="PF16517">
    <property type="entry name" value="Nore1-SARAH"/>
    <property type="match status" value="1"/>
</dbReference>
<dbReference type="Pfam" id="PF00788">
    <property type="entry name" value="RA"/>
    <property type="match status" value="1"/>
</dbReference>
<dbReference type="SMART" id="SM00109">
    <property type="entry name" value="C1"/>
    <property type="match status" value="1"/>
</dbReference>
<dbReference type="SMART" id="SM00314">
    <property type="entry name" value="RA"/>
    <property type="match status" value="1"/>
</dbReference>
<dbReference type="SUPFAM" id="SSF57889">
    <property type="entry name" value="Cysteine-rich domain"/>
    <property type="match status" value="1"/>
</dbReference>
<dbReference type="SUPFAM" id="SSF54236">
    <property type="entry name" value="Ubiquitin-like"/>
    <property type="match status" value="1"/>
</dbReference>
<dbReference type="PROSITE" id="PS50200">
    <property type="entry name" value="RA"/>
    <property type="match status" value="1"/>
</dbReference>
<dbReference type="PROSITE" id="PS50951">
    <property type="entry name" value="SARAH"/>
    <property type="match status" value="1"/>
</dbReference>
<dbReference type="PROSITE" id="PS50081">
    <property type="entry name" value="ZF_DAG_PE_2"/>
    <property type="match status" value="1"/>
</dbReference>
<accession>Q9NS23</accession>
<accession>B7ZLL1</accession>
<accession>O14571</accession>
<accession>O60539</accession>
<accession>O60710</accession>
<accession>Q0VGC6</accession>
<accession>Q5TZT2</accession>
<accession>Q9HB04</accession>
<accession>Q9HB18</accession>
<accession>Q9NS22</accession>
<accession>Q9UND4</accession>
<accession>Q9UND5</accession>
<feature type="initiator methionine" description="Removed" evidence="30">
    <location>
        <position position="1"/>
    </location>
</feature>
<feature type="chain" id="PRO_0000068891" description="Ras association domain-containing protein 1">
    <location>
        <begin position="2"/>
        <end position="344"/>
    </location>
</feature>
<feature type="domain" description="Ras-associating" evidence="2">
    <location>
        <begin position="198"/>
        <end position="292"/>
    </location>
</feature>
<feature type="domain" description="SARAH" evidence="4">
    <location>
        <begin position="294"/>
        <end position="341"/>
    </location>
</feature>
<feature type="zinc finger region" description="Phorbol-ester/DAG-type" evidence="3">
    <location>
        <begin position="51"/>
        <end position="105"/>
    </location>
</feature>
<feature type="region of interest" description="Mediates interaction with E4F1" evidence="10">
    <location>
        <begin position="2"/>
        <end position="119"/>
    </location>
</feature>
<feature type="region of interest" description="Disordered" evidence="5">
    <location>
        <begin position="179"/>
        <end position="203"/>
    </location>
</feature>
<feature type="region of interest" description="MOAP1-binding">
    <location>
        <begin position="315"/>
        <end position="318"/>
    </location>
</feature>
<feature type="compositionally biased region" description="Low complexity" evidence="5">
    <location>
        <begin position="179"/>
        <end position="189"/>
    </location>
</feature>
<feature type="modified residue" description="N-acetylserine" evidence="30">
    <location>
        <position position="2"/>
    </location>
</feature>
<feature type="modified residue" description="Phosphoserine" evidence="30">
    <location>
        <position position="2"/>
    </location>
</feature>
<feature type="modified residue" description="Omega-N-methylarginine" evidence="31">
    <location>
        <position position="36"/>
    </location>
</feature>
<feature type="splice variant" id="VSP_050770" description="In isoform B." evidence="19 21">
    <location>
        <begin position="1"/>
        <end position="155"/>
    </location>
</feature>
<feature type="splice variant" id="VSP_050773" description="In isoform C and isoform H." evidence="19 20 22">
    <location>
        <begin position="1"/>
        <end position="74"/>
    </location>
</feature>
<feature type="splice variant" id="VSP_050774" description="In isoform C and isoform H." evidence="19 20 22">
    <original>VVRKGLQCARLSADCKFTCHYRCRALVCLDCCGPRDLGWEPAVERDTNV</original>
    <variation>MGEAEAPSFEMTWSSTTSSGYCSQEDSDSELEQYFTARTSLARRPRRDQ</variation>
    <location>
        <begin position="75"/>
        <end position="123"/>
    </location>
</feature>
<feature type="splice variant" id="VSP_050775" description="In isoform G." evidence="20">
    <original>RLSADCKFTCHYRCRALVCLDCCGPRDLGWEPAVERDTNVDEPVEWETPDLSQAEIEQKIKEYNAQ</original>
    <variation>QQGRFLHRLHQGSAEAGAPCLCALQQEATLLAGCPAGPRTGHKCQAPHFLLPAQGCCQAPACAVTHKGT</variation>
    <location>
        <begin position="84"/>
        <end position="149"/>
    </location>
</feature>
<feature type="splice variant" id="VSP_050771" description="In isoform A and isoform E." evidence="19 20 21">
    <original>RLSAD</original>
    <variation>H</variation>
    <location>
        <begin position="84"/>
        <end position="88"/>
    </location>
</feature>
<feature type="splice variant" id="VSP_050776" description="In isoform F." evidence="20">
    <original>LSADCKF</original>
    <variation>RACGVGD</variation>
    <location>
        <begin position="85"/>
        <end position="91"/>
    </location>
</feature>
<feature type="splice variant" id="VSP_050777" description="In isoform F." evidence="20">
    <location>
        <begin position="93"/>
        <end position="344"/>
    </location>
</feature>
<feature type="splice variant" id="VSP_050772" description="In isoform E." evidence="20">
    <original>V</original>
    <variation>VPILQ</variation>
    <location>
        <position position="123"/>
    </location>
</feature>
<feature type="splice variant" id="VSP_050778" description="In isoform G and isoform H." evidence="20">
    <location>
        <begin position="150"/>
        <end position="344"/>
    </location>
</feature>
<feature type="sequence variant" id="VAR_019542" description="In dbSNP:rs4688725." evidence="6 7">
    <original>K</original>
    <variation>Q</variation>
    <location>
        <position position="21"/>
    </location>
</feature>
<feature type="sequence variant" id="VAR_019543" description="In dbSNP:rs201618726." evidence="7">
    <original>R</original>
    <variation>C</variation>
    <location>
        <position position="53"/>
    </location>
</feature>
<feature type="sequence variant" id="VAR_019544" description="In dbSNP:rs76335415." evidence="7">
    <original>D</original>
    <variation>E</variation>
    <location>
        <position position="133"/>
    </location>
</feature>
<feature type="sequence variant" id="VAR_019545" description="Prevents G1 cell cycle arrest; reduced protein phosphorylation; dbSNP:rs934370004." evidence="9">
    <original>S</original>
    <variation>F</variation>
    <location>
        <position position="135"/>
    </location>
</feature>
<feature type="sequence variant" id="VAR_019546" description="Prevents G1 cell cycle arrest; reduced protein phosphorylation; dbSNP:rs2073498." evidence="7 9">
    <original>A</original>
    <variation>S</variation>
    <location>
        <position position="137"/>
    </location>
</feature>
<feature type="sequence variant" id="VAR_059794" description="In dbSNP:rs12488879.">
    <original>H</original>
    <variation>R</variation>
    <location>
        <position position="319"/>
    </location>
</feature>
<feature type="sequence variant" id="VAR_019547" description="In dbSNP:rs782655006." evidence="7">
    <original>Y</original>
    <variation>C</variation>
    <location>
        <position position="329"/>
    </location>
</feature>
<feature type="helix" evidence="32">
    <location>
        <begin position="141"/>
        <end position="144"/>
    </location>
</feature>
<sequence length="344" mass="39219">MSGEPELIELRELAPAGRAGKGRTRLERANALRIARGTACNPTRQLVPGRGHRFQPAGPATHTWCDLCGDFIWGVVRKGLQCARLSADCKFTCHYRCRALVCLDCCGPRDLGWEPAVERDTNVDEPVEWETPDLSQAEIEQKIKEYNAQINSNLFMSLNKDGSYTGFIKVQLKLVRPVSVPSSKKPPSLQDARRGPGRGTSVRRRTSFYLPKDAVKHLHVLSRTRAREVIEALLRKFLVVDDPRKFALFERAERHGQVYLRKLLDDEQPLRLRLLAGPSDKALSFVLKENDSGEVNWDAFSMPELHNFLRILQREEEEHLRQILQKYSYCRQKIQEALHACPLG</sequence>